<organism>
    <name type="scientific">Methanocaldococcus jannaschii (strain ATCC 43067 / DSM 2661 / JAL-1 / JCM 10045 / NBRC 100440)</name>
    <name type="common">Methanococcus jannaschii</name>
    <dbReference type="NCBI Taxonomy" id="243232"/>
    <lineage>
        <taxon>Archaea</taxon>
        <taxon>Methanobacteriati</taxon>
        <taxon>Methanobacteriota</taxon>
        <taxon>Methanomada group</taxon>
        <taxon>Methanococci</taxon>
        <taxon>Methanococcales</taxon>
        <taxon>Methanocaldococcaceae</taxon>
        <taxon>Methanocaldococcus</taxon>
    </lineage>
</organism>
<reference key="1">
    <citation type="journal article" date="1996" name="Science">
        <title>Complete genome sequence of the methanogenic archaeon, Methanococcus jannaschii.</title>
        <authorList>
            <person name="Bult C.J."/>
            <person name="White O."/>
            <person name="Olsen G.J."/>
            <person name="Zhou L."/>
            <person name="Fleischmann R.D."/>
            <person name="Sutton G.G."/>
            <person name="Blake J.A."/>
            <person name="FitzGerald L.M."/>
            <person name="Clayton R.A."/>
            <person name="Gocayne J.D."/>
            <person name="Kerlavage A.R."/>
            <person name="Dougherty B.A."/>
            <person name="Tomb J.-F."/>
            <person name="Adams M.D."/>
            <person name="Reich C.I."/>
            <person name="Overbeek R."/>
            <person name="Kirkness E.F."/>
            <person name="Weinstock K.G."/>
            <person name="Merrick J.M."/>
            <person name="Glodek A."/>
            <person name="Scott J.L."/>
            <person name="Geoghagen N.S.M."/>
            <person name="Weidman J.F."/>
            <person name="Fuhrmann J.L."/>
            <person name="Nguyen D."/>
            <person name="Utterback T.R."/>
            <person name="Kelley J.M."/>
            <person name="Peterson J.D."/>
            <person name="Sadow P.W."/>
            <person name="Hanna M.C."/>
            <person name="Cotton M.D."/>
            <person name="Roberts K.M."/>
            <person name="Hurst M.A."/>
            <person name="Kaine B.P."/>
            <person name="Borodovsky M."/>
            <person name="Klenk H.-P."/>
            <person name="Fraser C.M."/>
            <person name="Smith H.O."/>
            <person name="Woese C.R."/>
            <person name="Venter J.C."/>
        </authorList>
    </citation>
    <scope>NUCLEOTIDE SEQUENCE [LARGE SCALE GENOMIC DNA]</scope>
    <source>
        <strain>ATCC 43067 / DSM 2661 / JAL-1 / JCM 10045 / NBRC 100440</strain>
    </source>
</reference>
<reference key="2">
    <citation type="patent" date="1999-03-11" number="WO9911821">
        <title>Method for screening restriction endonucleases.</title>
        <authorList>
            <person name="Noren C.J."/>
            <person name="Roberts R.J."/>
            <person name="Patti J."/>
            <person name="Byrd D.R."/>
            <person name="Morgan R.D."/>
        </authorList>
    </citation>
    <scope>CHARACTERIZATION</scope>
</reference>
<reference key="3">
    <citation type="journal article" date="2003" name="Nucleic Acids Res.">
        <title>A nomenclature for restriction enzymes, DNA methyltransferases, homing endonucleases and their genes.</title>
        <authorList>
            <person name="Roberts R.J."/>
            <person name="Belfort M."/>
            <person name="Bestor T."/>
            <person name="Bhagwat A.S."/>
            <person name="Bickle T.A."/>
            <person name="Bitinaite J."/>
            <person name="Blumenthal R.M."/>
            <person name="Degtyarev S.K."/>
            <person name="Dryden D.T."/>
            <person name="Dybvig K."/>
            <person name="Firman K."/>
            <person name="Gromova E.S."/>
            <person name="Gumport R.I."/>
            <person name="Halford S.E."/>
            <person name="Hattman S."/>
            <person name="Heitman J."/>
            <person name="Hornby D.P."/>
            <person name="Janulaitis A."/>
            <person name="Jeltsch A."/>
            <person name="Josephsen J."/>
            <person name="Kiss A."/>
            <person name="Klaenhammer T.R."/>
            <person name="Kobayashi I."/>
            <person name="Kong H."/>
            <person name="Krueger D.H."/>
            <person name="Lacks S."/>
            <person name="Marinus M.G."/>
            <person name="Miyahara M."/>
            <person name="Morgan R.D."/>
            <person name="Murray N.E."/>
            <person name="Nagaraja V."/>
            <person name="Piekarowicz A."/>
            <person name="Pingoud A."/>
            <person name="Raleigh E."/>
            <person name="Rao D.N."/>
            <person name="Reich N."/>
            <person name="Repin V.E."/>
            <person name="Selker E.U."/>
            <person name="Shaw P.C."/>
            <person name="Stein D.C."/>
            <person name="Stoddard B.L."/>
            <person name="Szybalski W."/>
            <person name="Trautner T.A."/>
            <person name="Van Etten J.L."/>
            <person name="Vitor J.M."/>
            <person name="Wilson G.G."/>
            <person name="Xu S.Y."/>
        </authorList>
    </citation>
    <scope>NOMENCLATURE</scope>
    <scope>SUBTYPE</scope>
</reference>
<comment type="function">
    <text evidence="1">A P subtype restriction enzyme that recognizes the double-stranded sequence 5'-GTNNAC-3'; the cleavage site is unknown.</text>
</comment>
<comment type="catalytic activity">
    <reaction>
        <text>Endonucleolytic cleavage of DNA to give specific double-stranded fragments with terminal 5'-phosphates.</text>
        <dbReference type="EC" id="3.1.21.4"/>
    </reaction>
</comment>
<proteinExistence type="evidence at protein level"/>
<name>T2M4_METJA</name>
<keyword id="KW-0238">DNA-binding</keyword>
<keyword id="KW-0255">Endonuclease</keyword>
<keyword id="KW-0378">Hydrolase</keyword>
<keyword id="KW-0540">Nuclease</keyword>
<keyword id="KW-1185">Reference proteome</keyword>
<keyword id="KW-0680">Restriction system</keyword>
<protein>
    <recommendedName>
        <fullName evidence="2">Type II restriction enzyme MjaIV</fullName>
        <shortName>R.MjaIV</shortName>
        <ecNumber>3.1.21.4</ecNumber>
    </recommendedName>
    <alternativeName>
        <fullName>Endonuclease MjaIV</fullName>
    </alternativeName>
    <alternativeName>
        <fullName>Type-2 restriction enzyme MjaIV</fullName>
    </alternativeName>
</protein>
<feature type="chain" id="PRO_0000077335" description="Type II restriction enzyme MjaIV">
    <location>
        <begin position="1"/>
        <end position="245"/>
    </location>
</feature>
<sequence length="245" mass="28779">MVVKLVNNELKILSGKLRDIFREIYNKIKNDENINDRNLDDKVLSLLKDYTISEENLKIKFSEPKDEIYSYEGRRTPYDLLCYGIINGKNFLIFINNKFGDLKSNTRNDVTTYNNLLRLYLGIKRQRLTSEITINGELVYNRISGNEIVSYGIFVVDKYRRGYKFFLLEEIKDDFYVNPRNNMFQIRYSPNLGDPIDYFAFVKKLIDAILESLEKSLNSIKTEILVLNSIKIQLINIKEGKHGED</sequence>
<evidence type="ECO:0000303" key="1">
    <source>
    </source>
</evidence>
<evidence type="ECO:0000303" key="2">
    <source ref="2"/>
</evidence>
<dbReference type="EC" id="3.1.21.4"/>
<dbReference type="EMBL" id="L77117">
    <property type="protein sequence ID" value="AAB99343.1"/>
    <property type="molecule type" value="Genomic_DNA"/>
</dbReference>
<dbReference type="PIR" id="F64465">
    <property type="entry name" value="F64465"/>
</dbReference>
<dbReference type="STRING" id="243232.MJ_1327"/>
<dbReference type="REBASE" id="3894">
    <property type="entry name" value="MjaIV"/>
</dbReference>
<dbReference type="PaxDb" id="243232-MJ_1327"/>
<dbReference type="EnsemblBacteria" id="AAB99343">
    <property type="protein sequence ID" value="AAB99343"/>
    <property type="gene ID" value="MJ_1327"/>
</dbReference>
<dbReference type="KEGG" id="mja:MJ_1327"/>
<dbReference type="HOGENOM" id="CLU_1131612_0_0_2"/>
<dbReference type="InParanoid" id="Q58723"/>
<dbReference type="BRENDA" id="3.1.21.4">
    <property type="organism ID" value="3260"/>
</dbReference>
<dbReference type="PRO" id="PR:Q58723"/>
<dbReference type="Proteomes" id="UP000000805">
    <property type="component" value="Chromosome"/>
</dbReference>
<dbReference type="GO" id="GO:0003677">
    <property type="term" value="F:DNA binding"/>
    <property type="evidence" value="ECO:0007669"/>
    <property type="project" value="UniProtKB-KW"/>
</dbReference>
<dbReference type="GO" id="GO:0009036">
    <property type="term" value="F:type II site-specific deoxyribonuclease activity"/>
    <property type="evidence" value="ECO:0007669"/>
    <property type="project" value="UniProtKB-EC"/>
</dbReference>
<dbReference type="GO" id="GO:0009307">
    <property type="term" value="P:DNA restriction-modification system"/>
    <property type="evidence" value="ECO:0007669"/>
    <property type="project" value="UniProtKB-KW"/>
</dbReference>
<gene>
    <name type="primary">mjaIVR</name>
    <name type="ordered locus">MJ1327</name>
</gene>
<accession>Q58723</accession>